<protein>
    <recommendedName>
        <fullName evidence="1">Small ribosomal subunit protein bS16</fullName>
    </recommendedName>
    <alternativeName>
        <fullName evidence="2">30S ribosomal protein S16</fullName>
    </alternativeName>
</protein>
<reference key="1">
    <citation type="journal article" date="2006" name="PLoS Genet.">
        <title>Who ate whom? Adaptive Helicobacter genomic changes that accompanied a host jump from early humans to large felines.</title>
        <authorList>
            <person name="Eppinger M."/>
            <person name="Baar C."/>
            <person name="Linz B."/>
            <person name="Raddatz G."/>
            <person name="Lanz C."/>
            <person name="Keller H."/>
            <person name="Morelli G."/>
            <person name="Gressmann H."/>
            <person name="Achtman M."/>
            <person name="Schuster S.C."/>
        </authorList>
    </citation>
    <scope>NUCLEOTIDE SEQUENCE [LARGE SCALE GENOMIC DNA]</scope>
    <source>
        <strain>Sheeba</strain>
    </source>
</reference>
<keyword id="KW-0687">Ribonucleoprotein</keyword>
<keyword id="KW-0689">Ribosomal protein</keyword>
<organism>
    <name type="scientific">Helicobacter acinonychis (strain Sheeba)</name>
    <dbReference type="NCBI Taxonomy" id="382638"/>
    <lineage>
        <taxon>Bacteria</taxon>
        <taxon>Pseudomonadati</taxon>
        <taxon>Campylobacterota</taxon>
        <taxon>Epsilonproteobacteria</taxon>
        <taxon>Campylobacterales</taxon>
        <taxon>Helicobacteraceae</taxon>
        <taxon>Helicobacter</taxon>
    </lineage>
</organism>
<evidence type="ECO:0000255" key="1">
    <source>
        <dbReference type="HAMAP-Rule" id="MF_00385"/>
    </source>
</evidence>
<evidence type="ECO:0000305" key="2"/>
<feature type="chain" id="PRO_1000049267" description="Small ribosomal subunit protein bS16">
    <location>
        <begin position="1"/>
        <end position="76"/>
    </location>
</feature>
<comment type="similarity">
    <text evidence="1">Belongs to the bacterial ribosomal protein bS16 family.</text>
</comment>
<name>RS16_HELAH</name>
<accession>Q17WB9</accession>
<sequence>MTVIRLTRIGRKKKPFYRVVVTDSRKRRDGGWIESIGYYNPLSEPKDIKIDKERLDYWKGVGAKMSERVEKLSQKA</sequence>
<dbReference type="EMBL" id="AM260522">
    <property type="protein sequence ID" value="CAK00057.1"/>
    <property type="molecule type" value="Genomic_DNA"/>
</dbReference>
<dbReference type="RefSeq" id="WP_000216122.1">
    <property type="nucleotide sequence ID" value="NC_008229.1"/>
</dbReference>
<dbReference type="SMR" id="Q17WB9"/>
<dbReference type="STRING" id="382638.Hac_1318"/>
<dbReference type="GeneID" id="31758639"/>
<dbReference type="KEGG" id="hac:Hac_1318"/>
<dbReference type="eggNOG" id="COG0228">
    <property type="taxonomic scope" value="Bacteria"/>
</dbReference>
<dbReference type="HOGENOM" id="CLU_100590_5_1_7"/>
<dbReference type="OrthoDB" id="9807878at2"/>
<dbReference type="BioCyc" id="HACI382638:HAC_RS05655-MONOMER"/>
<dbReference type="Proteomes" id="UP000000775">
    <property type="component" value="Chromosome"/>
</dbReference>
<dbReference type="GO" id="GO:0005737">
    <property type="term" value="C:cytoplasm"/>
    <property type="evidence" value="ECO:0007669"/>
    <property type="project" value="UniProtKB-ARBA"/>
</dbReference>
<dbReference type="GO" id="GO:0015935">
    <property type="term" value="C:small ribosomal subunit"/>
    <property type="evidence" value="ECO:0007669"/>
    <property type="project" value="TreeGrafter"/>
</dbReference>
<dbReference type="GO" id="GO:0003735">
    <property type="term" value="F:structural constituent of ribosome"/>
    <property type="evidence" value="ECO:0007669"/>
    <property type="project" value="InterPro"/>
</dbReference>
<dbReference type="GO" id="GO:0006412">
    <property type="term" value="P:translation"/>
    <property type="evidence" value="ECO:0007669"/>
    <property type="project" value="UniProtKB-UniRule"/>
</dbReference>
<dbReference type="FunFam" id="3.30.1320.10:FF:000005">
    <property type="entry name" value="30S ribosomal protein S16"/>
    <property type="match status" value="1"/>
</dbReference>
<dbReference type="Gene3D" id="3.30.1320.10">
    <property type="match status" value="1"/>
</dbReference>
<dbReference type="HAMAP" id="MF_00385">
    <property type="entry name" value="Ribosomal_bS16"/>
    <property type="match status" value="1"/>
</dbReference>
<dbReference type="InterPro" id="IPR000307">
    <property type="entry name" value="Ribosomal_bS16"/>
</dbReference>
<dbReference type="InterPro" id="IPR020592">
    <property type="entry name" value="Ribosomal_bS16_CS"/>
</dbReference>
<dbReference type="InterPro" id="IPR023803">
    <property type="entry name" value="Ribosomal_bS16_dom_sf"/>
</dbReference>
<dbReference type="NCBIfam" id="TIGR00002">
    <property type="entry name" value="S16"/>
    <property type="match status" value="1"/>
</dbReference>
<dbReference type="PANTHER" id="PTHR12919">
    <property type="entry name" value="30S RIBOSOMAL PROTEIN S16"/>
    <property type="match status" value="1"/>
</dbReference>
<dbReference type="PANTHER" id="PTHR12919:SF20">
    <property type="entry name" value="SMALL RIBOSOMAL SUBUNIT PROTEIN BS16M"/>
    <property type="match status" value="1"/>
</dbReference>
<dbReference type="Pfam" id="PF00886">
    <property type="entry name" value="Ribosomal_S16"/>
    <property type="match status" value="1"/>
</dbReference>
<dbReference type="SUPFAM" id="SSF54565">
    <property type="entry name" value="Ribosomal protein S16"/>
    <property type="match status" value="1"/>
</dbReference>
<dbReference type="PROSITE" id="PS00732">
    <property type="entry name" value="RIBOSOMAL_S16"/>
    <property type="match status" value="1"/>
</dbReference>
<proteinExistence type="inferred from homology"/>
<gene>
    <name evidence="1" type="primary">rpsP</name>
    <name type="ordered locus">Hac_1318</name>
</gene>